<organism>
    <name type="scientific">Arabidopsis thaliana</name>
    <name type="common">Mouse-ear cress</name>
    <dbReference type="NCBI Taxonomy" id="3702"/>
    <lineage>
        <taxon>Eukaryota</taxon>
        <taxon>Viridiplantae</taxon>
        <taxon>Streptophyta</taxon>
        <taxon>Embryophyta</taxon>
        <taxon>Tracheophyta</taxon>
        <taxon>Spermatophyta</taxon>
        <taxon>Magnoliopsida</taxon>
        <taxon>eudicotyledons</taxon>
        <taxon>Gunneridae</taxon>
        <taxon>Pentapetalae</taxon>
        <taxon>rosids</taxon>
        <taxon>malvids</taxon>
        <taxon>Brassicales</taxon>
        <taxon>Brassicaceae</taxon>
        <taxon>Camelineae</taxon>
        <taxon>Arabidopsis</taxon>
    </lineage>
</organism>
<proteinExistence type="evidence at protein level"/>
<reference key="1">
    <citation type="journal article" date="2000" name="Nature">
        <title>Sequence and analysis of chromosome 5 of the plant Arabidopsis thaliana.</title>
        <authorList>
            <person name="Tabata S."/>
            <person name="Kaneko T."/>
            <person name="Nakamura Y."/>
            <person name="Kotani H."/>
            <person name="Kato T."/>
            <person name="Asamizu E."/>
            <person name="Miyajima N."/>
            <person name="Sasamoto S."/>
            <person name="Kimura T."/>
            <person name="Hosouchi T."/>
            <person name="Kawashima K."/>
            <person name="Kohara M."/>
            <person name="Matsumoto M."/>
            <person name="Matsuno A."/>
            <person name="Muraki A."/>
            <person name="Nakayama S."/>
            <person name="Nakazaki N."/>
            <person name="Naruo K."/>
            <person name="Okumura S."/>
            <person name="Shinpo S."/>
            <person name="Takeuchi C."/>
            <person name="Wada T."/>
            <person name="Watanabe A."/>
            <person name="Yamada M."/>
            <person name="Yasuda M."/>
            <person name="Sato S."/>
            <person name="de la Bastide M."/>
            <person name="Huang E."/>
            <person name="Spiegel L."/>
            <person name="Gnoj L."/>
            <person name="O'Shaughnessy A."/>
            <person name="Preston R."/>
            <person name="Habermann K."/>
            <person name="Murray J."/>
            <person name="Johnson D."/>
            <person name="Rohlfing T."/>
            <person name="Nelson J."/>
            <person name="Stoneking T."/>
            <person name="Pepin K."/>
            <person name="Spieth J."/>
            <person name="Sekhon M."/>
            <person name="Armstrong J."/>
            <person name="Becker M."/>
            <person name="Belter E."/>
            <person name="Cordum H."/>
            <person name="Cordes M."/>
            <person name="Courtney L."/>
            <person name="Courtney W."/>
            <person name="Dante M."/>
            <person name="Du H."/>
            <person name="Edwards J."/>
            <person name="Fryman J."/>
            <person name="Haakensen B."/>
            <person name="Lamar E."/>
            <person name="Latreille P."/>
            <person name="Leonard S."/>
            <person name="Meyer R."/>
            <person name="Mulvaney E."/>
            <person name="Ozersky P."/>
            <person name="Riley A."/>
            <person name="Strowmatt C."/>
            <person name="Wagner-McPherson C."/>
            <person name="Wollam A."/>
            <person name="Yoakum M."/>
            <person name="Bell M."/>
            <person name="Dedhia N."/>
            <person name="Parnell L."/>
            <person name="Shah R."/>
            <person name="Rodriguez M."/>
            <person name="Hoon See L."/>
            <person name="Vil D."/>
            <person name="Baker J."/>
            <person name="Kirchoff K."/>
            <person name="Toth K."/>
            <person name="King L."/>
            <person name="Bahret A."/>
            <person name="Miller B."/>
            <person name="Marra M.A."/>
            <person name="Martienssen R."/>
            <person name="McCombie W.R."/>
            <person name="Wilson R.K."/>
            <person name="Murphy G."/>
            <person name="Bancroft I."/>
            <person name="Volckaert G."/>
            <person name="Wambutt R."/>
            <person name="Duesterhoeft A."/>
            <person name="Stiekema W."/>
            <person name="Pohl T."/>
            <person name="Entian K.-D."/>
            <person name="Terryn N."/>
            <person name="Hartley N."/>
            <person name="Bent E."/>
            <person name="Johnson S."/>
            <person name="Langham S.-A."/>
            <person name="McCullagh B."/>
            <person name="Robben J."/>
            <person name="Grymonprez B."/>
            <person name="Zimmermann W."/>
            <person name="Ramsperger U."/>
            <person name="Wedler H."/>
            <person name="Balke K."/>
            <person name="Wedler E."/>
            <person name="Peters S."/>
            <person name="van Staveren M."/>
            <person name="Dirkse W."/>
            <person name="Mooijman P."/>
            <person name="Klein Lankhorst R."/>
            <person name="Weitzenegger T."/>
            <person name="Bothe G."/>
            <person name="Rose M."/>
            <person name="Hauf J."/>
            <person name="Berneiser S."/>
            <person name="Hempel S."/>
            <person name="Feldpausch M."/>
            <person name="Lamberth S."/>
            <person name="Villarroel R."/>
            <person name="Gielen J."/>
            <person name="Ardiles W."/>
            <person name="Bents O."/>
            <person name="Lemcke K."/>
            <person name="Kolesov G."/>
            <person name="Mayer K.F.X."/>
            <person name="Rudd S."/>
            <person name="Schoof H."/>
            <person name="Schueller C."/>
            <person name="Zaccaria P."/>
            <person name="Mewes H.-W."/>
            <person name="Bevan M."/>
            <person name="Fransz P.F."/>
        </authorList>
    </citation>
    <scope>NUCLEOTIDE SEQUENCE [LARGE SCALE GENOMIC DNA]</scope>
    <source>
        <strain>cv. Columbia</strain>
    </source>
</reference>
<reference key="2">
    <citation type="journal article" date="2017" name="Plant J.">
        <title>Araport11: a complete reannotation of the Arabidopsis thaliana reference genome.</title>
        <authorList>
            <person name="Cheng C.Y."/>
            <person name="Krishnakumar V."/>
            <person name="Chan A.P."/>
            <person name="Thibaud-Nissen F."/>
            <person name="Schobel S."/>
            <person name="Town C.D."/>
        </authorList>
    </citation>
    <scope>GENOME REANNOTATION</scope>
    <source>
        <strain>cv. Columbia</strain>
    </source>
</reference>
<reference key="3">
    <citation type="journal article" date="2003" name="Science">
        <title>Empirical analysis of transcriptional activity in the Arabidopsis genome.</title>
        <authorList>
            <person name="Yamada K."/>
            <person name="Lim J."/>
            <person name="Dale J.M."/>
            <person name="Chen H."/>
            <person name="Shinn P."/>
            <person name="Palm C.J."/>
            <person name="Southwick A.M."/>
            <person name="Wu H.C."/>
            <person name="Kim C.J."/>
            <person name="Nguyen M."/>
            <person name="Pham P.K."/>
            <person name="Cheuk R.F."/>
            <person name="Karlin-Newmann G."/>
            <person name="Liu S.X."/>
            <person name="Lam B."/>
            <person name="Sakano H."/>
            <person name="Wu T."/>
            <person name="Yu G."/>
            <person name="Miranda M."/>
            <person name="Quach H.L."/>
            <person name="Tripp M."/>
            <person name="Chang C.H."/>
            <person name="Lee J.M."/>
            <person name="Toriumi M.J."/>
            <person name="Chan M.M."/>
            <person name="Tang C.C."/>
            <person name="Onodera C.S."/>
            <person name="Deng J.M."/>
            <person name="Akiyama K."/>
            <person name="Ansari Y."/>
            <person name="Arakawa T."/>
            <person name="Banh J."/>
            <person name="Banno F."/>
            <person name="Bowser L."/>
            <person name="Brooks S.Y."/>
            <person name="Carninci P."/>
            <person name="Chao Q."/>
            <person name="Choy N."/>
            <person name="Enju A."/>
            <person name="Goldsmith A.D."/>
            <person name="Gurjal M."/>
            <person name="Hansen N.F."/>
            <person name="Hayashizaki Y."/>
            <person name="Johnson-Hopson C."/>
            <person name="Hsuan V.W."/>
            <person name="Iida K."/>
            <person name="Karnes M."/>
            <person name="Khan S."/>
            <person name="Koesema E."/>
            <person name="Ishida J."/>
            <person name="Jiang P.X."/>
            <person name="Jones T."/>
            <person name="Kawai J."/>
            <person name="Kamiya A."/>
            <person name="Meyers C."/>
            <person name="Nakajima M."/>
            <person name="Narusaka M."/>
            <person name="Seki M."/>
            <person name="Sakurai T."/>
            <person name="Satou M."/>
            <person name="Tamse R."/>
            <person name="Vaysberg M."/>
            <person name="Wallender E.K."/>
            <person name="Wong C."/>
            <person name="Yamamura Y."/>
            <person name="Yuan S."/>
            <person name="Shinozaki K."/>
            <person name="Davis R.W."/>
            <person name="Theologis A."/>
            <person name="Ecker J.R."/>
        </authorList>
    </citation>
    <scope>NUCLEOTIDE SEQUENCE [LARGE SCALE MRNA]</scope>
    <source>
        <strain>cv. Columbia</strain>
    </source>
</reference>
<reference key="4">
    <citation type="journal article" date="2006" name="Science">
        <title>TOPLESS regulates apical embryonic fate in Arabidopsis.</title>
        <authorList>
            <person name="Long J.A."/>
            <person name="Ohno C."/>
            <person name="Smith Z.R."/>
            <person name="Meyerowitz E.M."/>
        </authorList>
    </citation>
    <scope>GENE FAMILY</scope>
    <scope>NOMENCLATURE</scope>
</reference>
<reference key="5">
    <citation type="journal article" date="2010" name="Nature">
        <title>NINJA connects the co-repressor TOPLESS to jasmonate signalling.</title>
        <authorList>
            <person name="Pauwels L."/>
            <person name="Barbero G.F."/>
            <person name="Geerinck J."/>
            <person name="Tilleman S."/>
            <person name="Grunewald W."/>
            <person name="Perez A.C."/>
            <person name="Chico J.M."/>
            <person name="Bossche R.V."/>
            <person name="Sewell J."/>
            <person name="Gil E."/>
            <person name="Garcia-Casado G."/>
            <person name="Witters E."/>
            <person name="Inze D."/>
            <person name="Long J.A."/>
            <person name="De Jaeger G."/>
            <person name="Solano R."/>
            <person name="Goossens A."/>
        </authorList>
    </citation>
    <scope>INTERACTION WITH AFPH2</scope>
</reference>
<reference key="6">
    <citation type="journal article" date="2013" name="Plant Cell">
        <title>The TIE1 transcriptional repressor links TCP transcription factors with TOPLESS/TOPLESS-RELATED corepressors and modulates leaf development in Arabidopsis.</title>
        <authorList>
            <person name="Tao Q."/>
            <person name="Guo D."/>
            <person name="Wei B."/>
            <person name="Zhang F."/>
            <person name="Pang C."/>
            <person name="Jiang H."/>
            <person name="Zhang J."/>
            <person name="Wei T."/>
            <person name="Gu H."/>
            <person name="Qu L.J."/>
            <person name="Qin G."/>
        </authorList>
    </citation>
    <scope>INTERACTION WITH SPEAR3/TIE1</scope>
</reference>
<reference key="7">
    <citation type="journal article" date="2012" name="Plant Physiol.">
        <title>The TOPLESS interactome: a framework for gene repression in Arabidopsis.</title>
        <authorList>
            <person name="Causier B."/>
            <person name="Ashworth M."/>
            <person name="Guo W."/>
            <person name="Davies B."/>
        </authorList>
    </citation>
    <scope>INTERACTION WITH SMXL6</scope>
</reference>
<reference key="8">
    <citation type="journal article" date="2014" name="J. Genet. Genomics">
        <title>SPOROCYTELESS is a novel embryophyte-specific transcription repressor that interacts with TPL and TCP proteins in Arabidopsis.</title>
        <authorList>
            <person name="Chen G.H."/>
            <person name="Sun J.Y."/>
            <person name="Liu M."/>
            <person name="Liu J."/>
            <person name="Yang W.C."/>
        </authorList>
    </citation>
    <scope>INTERACTION WITH SPL</scope>
</reference>
<reference key="9">
    <citation type="journal article" date="2015" name="Cell Res.">
        <title>The molecular mechanism of sporocyteless/nozzle in controlling Arabidopsis ovule development.</title>
        <authorList>
            <person name="Wei B."/>
            <person name="Zhang J."/>
            <person name="Pang C."/>
            <person name="Yu H."/>
            <person name="Guo D."/>
            <person name="Jiang H."/>
            <person name="Ding M."/>
            <person name="Chen Z."/>
            <person name="Tao Q."/>
            <person name="Gu H."/>
            <person name="Qu L.J."/>
            <person name="Qin G."/>
        </authorList>
    </citation>
    <scope>INTERACTION WITH SPL</scope>
</reference>
<reference key="10">
    <citation type="journal article" date="2015" name="Sci. Adv.">
        <title>Structural basis for recognition of diverse transcriptional repressors by the TOPLESS family of corepressors.</title>
        <authorList>
            <person name="Ke J."/>
            <person name="Ma H."/>
            <person name="Gu X."/>
            <person name="Thelen A."/>
            <person name="Brunzelle J.S."/>
            <person name="Li J."/>
            <person name="Xu H.E."/>
            <person name="Melcher K."/>
        </authorList>
    </citation>
    <scope>SUBUNIT</scope>
    <scope>DOMAIN</scope>
</reference>
<keyword id="KW-0025">Alternative splicing</keyword>
<keyword id="KW-1184">Jasmonic acid signaling pathway</keyword>
<keyword id="KW-0539">Nucleus</keyword>
<keyword id="KW-0597">Phosphoprotein</keyword>
<keyword id="KW-1185">Reference proteome</keyword>
<keyword id="KW-0677">Repeat</keyword>
<keyword id="KW-0678">Repressor</keyword>
<keyword id="KW-0804">Transcription</keyword>
<keyword id="KW-0805">Transcription regulation</keyword>
<keyword id="KW-0853">WD repeat</keyword>
<sequence>MSSLSRELVFLILQFLEEEKFKESVHRLEKESGFFFNTKYFDEKVLAGEWDDVETYLSGFTKVDDNRYSMKIFFEIRKQKYLEALDRQEKAKAVEILVQDLRVFSTFNEELYKEITQLLTLQNFRENEQLSKYGDTKTARGIMLGELKKLIEANPLFRDKLMFPTLRSSRLRTLINQSLNWQHQLCKNPRPNPDIKTLFTDHTCTLPNGPLAPSAVNQPVTTLTKPAAYPSLGPHVPFPPGPAAANAGALASWMAAASGASAVQAAVVTPALMPQPQNQMSILKRPRTPPATPGIVDYQNPDHELMKRLRPAPSVEEVTYPAPRQQAPWSLEDLPTKAALALHQGSTVTSMEFYPMQNTLLLVGSATGEITLWELAARERLVSRPFKIWDMSNCSHQFQALIAKETPISVTRVAWSPDGNFIGVAFTKHLIQLYAFSGPNDLRQHTEIDAHVGAVNDLAFANPNRQLCVITCGDDKLIKVWDVSGRKHFTFEGHDAPVYSICPHYKENIQFIFSTAIDGKIKAWLYDNLGSRVDYDAPGKWCTRMLYSADGTRLFSCGTSKDGDSFLVEWNESEGSIKRTYKEFQKKLAGVVQFDTSKNHFLAVGEDGQIKFWDMNNINVLTSTDAEGGLPALPHLRFNKDGNLLAVTTADNGFKILANPAGFRSLRAMETPASETMRTPVDFKAVPGAPVASVNCKVERGSPVRHSQMLNGVDPSKSRIDDSTDKPKSWQLAEILDPSQCFQATLPDTAGSSTKVVQLLYTNSGAGILALGSNGIQRLWKWVPNEQNPSGKATATVVPQHWQPNSGLLMTNDVSGVNLENAAPCIALSKNDSYVMSAAGGKVSLFNMMTFKVMTTFMPPPPASTFLAFHPQDNNVIAIGMEDSTIHIYNVRVDEVKSKLKGHQKRITGLAFSTALNILVSSGADAQICFWSIDTWEKRKSVAIQMPAGKAANGDTRVQFHVDQLRILVVHETQLAVFDASKMECIRQWIPQDSLSAPISSAVYACNSQLIYTTFRDGNIGVFDADSLRLRCRISPSAYLPQGNQGLSPLVVAAHPQDPNQFAVGLNDGSVKMMEPTEGEGKWGMIPPSEAINSPSTTSNQTPEQLQR</sequence>
<protein>
    <recommendedName>
        <fullName>Topless-related protein 3</fullName>
    </recommendedName>
</protein>
<comment type="function">
    <text evidence="1">Transcriptional corepressor. Negative regulator of jasmonate responses (By similarity).</text>
</comment>
<comment type="subunit">
    <text evidence="6 7 8 9 10 11">Tetramer (PubMed:26601214). Interacts with NINJA/AFPH2 (PubMed:20360743). Interacts with SMXL6 (PubMed:22065421). Interacts with SPL (via EAR motif) (PubMed:25378179, PubMed:25527103). Interacts with SPEAR3/TIE1 (PubMed:23444332).</text>
</comment>
<comment type="subcellular location">
    <subcellularLocation>
        <location evidence="1">Nucleus</location>
    </subcellularLocation>
</comment>
<comment type="alternative products">
    <event type="alternative splicing"/>
    <isoform>
        <id>Q84JM4-1</id>
        <name>1</name>
        <sequence type="displayed"/>
    </isoform>
    <text>A number of isoforms are produced. According to EST sequences.</text>
</comment>
<comment type="domain">
    <text evidence="11">The N-terminal TOPLESS domain (TPD) (1-209) binds directly to a 12-amino acid LxLxL EAR motif peptide.</text>
</comment>
<comment type="sequence caution" evidence="12">
    <conflict type="erroneous gene model prediction">
        <sequence resource="EMBL-CDS" id="AAD48936"/>
    </conflict>
</comment>
<dbReference type="EMBL" id="AF160760">
    <property type="protein sequence ID" value="AAD48936.1"/>
    <property type="status" value="ALT_SEQ"/>
    <property type="molecule type" value="Genomic_DNA"/>
</dbReference>
<dbReference type="EMBL" id="CP002688">
    <property type="protein sequence ID" value="AED93642.1"/>
    <property type="molecule type" value="Genomic_DNA"/>
</dbReference>
<dbReference type="EMBL" id="BT004037">
    <property type="protein sequence ID" value="AAO42071.1"/>
    <property type="molecule type" value="mRNA"/>
</dbReference>
<dbReference type="EMBL" id="BT005165">
    <property type="protein sequence ID" value="AAO50698.1"/>
    <property type="molecule type" value="mRNA"/>
</dbReference>
<dbReference type="RefSeq" id="NP_198055.3">
    <molecule id="Q84JM4-1"/>
    <property type="nucleotide sequence ID" value="NM_122585.5"/>
</dbReference>
<dbReference type="BioGRID" id="18036">
    <property type="interactions" value="74"/>
</dbReference>
<dbReference type="DIP" id="DIP-58587N"/>
<dbReference type="FunCoup" id="Q84JM4">
    <property type="interactions" value="576"/>
</dbReference>
<dbReference type="IntAct" id="Q84JM4">
    <property type="interactions" value="5"/>
</dbReference>
<dbReference type="STRING" id="3702.Q84JM4"/>
<dbReference type="GlyGen" id="Q84JM4">
    <property type="glycosylation" value="1 site"/>
</dbReference>
<dbReference type="iPTMnet" id="Q84JM4"/>
<dbReference type="PaxDb" id="3702-AT5G27030.2"/>
<dbReference type="ProteomicsDB" id="245205">
    <molecule id="Q84JM4-1"/>
</dbReference>
<dbReference type="EnsemblPlants" id="AT5G27030.1">
    <molecule id="Q84JM4-1"/>
    <property type="protein sequence ID" value="AT5G27030.1"/>
    <property type="gene ID" value="AT5G27030"/>
</dbReference>
<dbReference type="GeneID" id="832761"/>
<dbReference type="Gramene" id="AT5G27030.1">
    <molecule id="Q84JM4-1"/>
    <property type="protein sequence ID" value="AT5G27030.1"/>
    <property type="gene ID" value="AT5G27030"/>
</dbReference>
<dbReference type="KEGG" id="ath:AT5G27030"/>
<dbReference type="Araport" id="AT5G27030"/>
<dbReference type="TAIR" id="AT5G27030">
    <property type="gene designation" value="TPR3"/>
</dbReference>
<dbReference type="eggNOG" id="KOG0266">
    <property type="taxonomic scope" value="Eukaryota"/>
</dbReference>
<dbReference type="InParanoid" id="Q84JM4"/>
<dbReference type="OrthoDB" id="1602884at2759"/>
<dbReference type="PhylomeDB" id="Q84JM4"/>
<dbReference type="CD-CODE" id="4299E36E">
    <property type="entry name" value="Nucleolus"/>
</dbReference>
<dbReference type="PRO" id="PR:Q84JM4"/>
<dbReference type="Proteomes" id="UP000006548">
    <property type="component" value="Chromosome 5"/>
</dbReference>
<dbReference type="ExpressionAtlas" id="Q84JM4">
    <property type="expression patterns" value="baseline and differential"/>
</dbReference>
<dbReference type="GO" id="GO:0005634">
    <property type="term" value="C:nucleus"/>
    <property type="evidence" value="ECO:0007669"/>
    <property type="project" value="UniProtKB-SubCell"/>
</dbReference>
<dbReference type="GO" id="GO:0006355">
    <property type="term" value="P:regulation of DNA-templated transcription"/>
    <property type="evidence" value="ECO:0007669"/>
    <property type="project" value="InterPro"/>
</dbReference>
<dbReference type="FunFam" id="2.130.10.10:FF:001382">
    <property type="entry name" value="TOPLESS-related 3"/>
    <property type="match status" value="1"/>
</dbReference>
<dbReference type="FunFam" id="2.130.10.10:FF:000479">
    <property type="entry name" value="Topless-related protein 3"/>
    <property type="match status" value="1"/>
</dbReference>
<dbReference type="Gene3D" id="2.130.10.10">
    <property type="entry name" value="YVTN repeat-like/Quinoprotein amine dehydrogenase"/>
    <property type="match status" value="4"/>
</dbReference>
<dbReference type="InterPro" id="IPR006595">
    <property type="entry name" value="CTLH_C"/>
</dbReference>
<dbReference type="InterPro" id="IPR006594">
    <property type="entry name" value="LisH"/>
</dbReference>
<dbReference type="InterPro" id="IPR011047">
    <property type="entry name" value="Quinoprotein_ADH-like_sf"/>
</dbReference>
<dbReference type="InterPro" id="IPR027728">
    <property type="entry name" value="Topless_fam"/>
</dbReference>
<dbReference type="InterPro" id="IPR048419">
    <property type="entry name" value="Topless_Znf"/>
</dbReference>
<dbReference type="InterPro" id="IPR054532">
    <property type="entry name" value="TPL_SMU1_LisH-like"/>
</dbReference>
<dbReference type="InterPro" id="IPR054080">
    <property type="entry name" value="TPR1-like_2nd"/>
</dbReference>
<dbReference type="InterPro" id="IPR015943">
    <property type="entry name" value="WD40/YVTN_repeat-like_dom_sf"/>
</dbReference>
<dbReference type="InterPro" id="IPR019775">
    <property type="entry name" value="WD40_repeat_CS"/>
</dbReference>
<dbReference type="InterPro" id="IPR001680">
    <property type="entry name" value="WD40_rpt"/>
</dbReference>
<dbReference type="PANTHER" id="PTHR44083">
    <property type="entry name" value="TOPLESS-RELATED PROTEIN 1-RELATED"/>
    <property type="match status" value="1"/>
</dbReference>
<dbReference type="PANTHER" id="PTHR44083:SF2">
    <property type="entry name" value="TOPLESS-RELATED PROTEIN 3"/>
    <property type="match status" value="1"/>
</dbReference>
<dbReference type="Pfam" id="PF17814">
    <property type="entry name" value="LisH_TPL"/>
    <property type="match status" value="1"/>
</dbReference>
<dbReference type="Pfam" id="PF21889">
    <property type="entry name" value="TPR1-like_2nd"/>
    <property type="match status" value="1"/>
</dbReference>
<dbReference type="Pfam" id="PF00400">
    <property type="entry name" value="WD40"/>
    <property type="match status" value="3"/>
</dbReference>
<dbReference type="Pfam" id="PF21359">
    <property type="entry name" value="zf_topless"/>
    <property type="match status" value="1"/>
</dbReference>
<dbReference type="SMART" id="SM00668">
    <property type="entry name" value="CTLH"/>
    <property type="match status" value="1"/>
</dbReference>
<dbReference type="SMART" id="SM00667">
    <property type="entry name" value="LisH"/>
    <property type="match status" value="1"/>
</dbReference>
<dbReference type="SMART" id="SM00320">
    <property type="entry name" value="WD40"/>
    <property type="match status" value="10"/>
</dbReference>
<dbReference type="SUPFAM" id="SSF50998">
    <property type="entry name" value="Quinoprotein alcohol dehydrogenase-like"/>
    <property type="match status" value="2"/>
</dbReference>
<dbReference type="PROSITE" id="PS50897">
    <property type="entry name" value="CTLH"/>
    <property type="match status" value="1"/>
</dbReference>
<dbReference type="PROSITE" id="PS50896">
    <property type="entry name" value="LISH"/>
    <property type="match status" value="1"/>
</dbReference>
<dbReference type="PROSITE" id="PS00678">
    <property type="entry name" value="WD_REPEATS_1"/>
    <property type="match status" value="1"/>
</dbReference>
<dbReference type="PROSITE" id="PS50082">
    <property type="entry name" value="WD_REPEATS_2"/>
    <property type="match status" value="3"/>
</dbReference>
<dbReference type="PROSITE" id="PS50294">
    <property type="entry name" value="WD_REPEATS_REGION"/>
    <property type="match status" value="2"/>
</dbReference>
<name>TPR3_ARATH</name>
<evidence type="ECO:0000250" key="1"/>
<evidence type="ECO:0000250" key="2">
    <source>
        <dbReference type="UniProtKB" id="Q94AI7"/>
    </source>
</evidence>
<evidence type="ECO:0000255" key="3">
    <source>
        <dbReference type="PROSITE-ProRule" id="PRU00058"/>
    </source>
</evidence>
<evidence type="ECO:0000255" key="4">
    <source>
        <dbReference type="PROSITE-ProRule" id="PRU00126"/>
    </source>
</evidence>
<evidence type="ECO:0000256" key="5">
    <source>
        <dbReference type="SAM" id="MobiDB-lite"/>
    </source>
</evidence>
<evidence type="ECO:0000269" key="6">
    <source>
    </source>
</evidence>
<evidence type="ECO:0000269" key="7">
    <source>
    </source>
</evidence>
<evidence type="ECO:0000269" key="8">
    <source>
    </source>
</evidence>
<evidence type="ECO:0000269" key="9">
    <source>
    </source>
</evidence>
<evidence type="ECO:0000269" key="10">
    <source>
    </source>
</evidence>
<evidence type="ECO:0000269" key="11">
    <source>
    </source>
</evidence>
<evidence type="ECO:0000305" key="12"/>
<feature type="chain" id="PRO_0000394734" description="Topless-related protein 3">
    <location>
        <begin position="1"/>
        <end position="1108"/>
    </location>
</feature>
<feature type="domain" description="LisH" evidence="4">
    <location>
        <begin position="4"/>
        <end position="36"/>
    </location>
</feature>
<feature type="domain" description="CTLH" evidence="3">
    <location>
        <begin position="34"/>
        <end position="92"/>
    </location>
</feature>
<feature type="repeat" description="WD 1">
    <location>
        <begin position="343"/>
        <end position="383"/>
    </location>
</feature>
<feature type="repeat" description="WD 2">
    <location>
        <begin position="405"/>
        <end position="444"/>
    </location>
</feature>
<feature type="repeat" description="WD 3">
    <location>
        <begin position="450"/>
        <end position="491"/>
    </location>
</feature>
<feature type="repeat" description="WD 4">
    <location>
        <begin position="493"/>
        <end position="534"/>
    </location>
</feature>
<feature type="repeat" description="WD 5">
    <location>
        <begin position="583"/>
        <end position="623"/>
    </location>
</feature>
<feature type="repeat" description="WD 6">
    <location>
        <begin position="628"/>
        <end position="667"/>
    </location>
</feature>
<feature type="repeat" description="WD 7">
    <location>
        <begin position="751"/>
        <end position="790"/>
    </location>
</feature>
<feature type="repeat" description="WD 8">
    <location>
        <begin position="818"/>
        <end position="856"/>
    </location>
</feature>
<feature type="repeat" description="WD 9">
    <location>
        <begin position="859"/>
        <end position="899"/>
    </location>
</feature>
<feature type="repeat" description="WD 10">
    <location>
        <begin position="902"/>
        <end position="941"/>
    </location>
</feature>
<feature type="repeat" description="WD 11">
    <location>
        <begin position="994"/>
        <end position="1033"/>
    </location>
</feature>
<feature type="region of interest" description="Disordered" evidence="5">
    <location>
        <begin position="706"/>
        <end position="725"/>
    </location>
</feature>
<feature type="region of interest" description="Disordered" evidence="5">
    <location>
        <begin position="1084"/>
        <end position="1108"/>
    </location>
</feature>
<feature type="compositionally biased region" description="Basic and acidic residues" evidence="5">
    <location>
        <begin position="716"/>
        <end position="725"/>
    </location>
</feature>
<feature type="compositionally biased region" description="Polar residues" evidence="5">
    <location>
        <begin position="1091"/>
        <end position="1108"/>
    </location>
</feature>
<feature type="modified residue" description="Phosphoserine" evidence="2">
    <location>
        <position position="214"/>
    </location>
</feature>
<gene>
    <name type="primary">TPR3</name>
    <name type="ordered locus">At5g27030</name>
    <name type="ORF">F15P11.3</name>
    <name type="ORF">F2P16.14</name>
</gene>
<accession>Q84JM4</accession>
<accession>Q9S9U5</accession>